<name>GT943_SIRGR</name>
<gene>
    <name evidence="7" type="primary">UGT94-289-3</name>
    <name evidence="8" type="synonym">UGT94-MS1</name>
</gene>
<dbReference type="EC" id="2.4.1.-" evidence="3 6 4"/>
<dbReference type="SMR" id="P0DO67"/>
<dbReference type="UniPathway" id="UPA00213"/>
<dbReference type="GO" id="GO:0008194">
    <property type="term" value="F:UDP-glycosyltransferase activity"/>
    <property type="evidence" value="ECO:0007669"/>
    <property type="project" value="InterPro"/>
</dbReference>
<dbReference type="GO" id="GO:1901137">
    <property type="term" value="P:carbohydrate derivative biosynthetic process"/>
    <property type="evidence" value="ECO:0007669"/>
    <property type="project" value="UniProtKB-ARBA"/>
</dbReference>
<dbReference type="CDD" id="cd03784">
    <property type="entry name" value="GT1_Gtf-like"/>
    <property type="match status" value="1"/>
</dbReference>
<dbReference type="FunFam" id="3.40.50.2000:FF:000060">
    <property type="entry name" value="Glycosyltransferase"/>
    <property type="match status" value="1"/>
</dbReference>
<dbReference type="Gene3D" id="3.40.50.2000">
    <property type="entry name" value="Glycogen Phosphorylase B"/>
    <property type="match status" value="2"/>
</dbReference>
<dbReference type="InterPro" id="IPR002213">
    <property type="entry name" value="UDP_glucos_trans"/>
</dbReference>
<dbReference type="InterPro" id="IPR035595">
    <property type="entry name" value="UDP_glycos_trans_CS"/>
</dbReference>
<dbReference type="PANTHER" id="PTHR48044">
    <property type="entry name" value="GLYCOSYLTRANSFERASE"/>
    <property type="match status" value="1"/>
</dbReference>
<dbReference type="PANTHER" id="PTHR48044:SF29">
    <property type="entry name" value="GLYCOSYLTRANSFERASE"/>
    <property type="match status" value="1"/>
</dbReference>
<dbReference type="Pfam" id="PF00201">
    <property type="entry name" value="UDPGT"/>
    <property type="match status" value="1"/>
</dbReference>
<dbReference type="SUPFAM" id="SSF53756">
    <property type="entry name" value="UDP-Glycosyltransferase/glycogen phosphorylase"/>
    <property type="match status" value="1"/>
</dbReference>
<sequence>MTIFFSVEILVLGIAEFAAIAMDAAQQGDTTTILMLPWLGYGHLSAFLELAKSLSRRNFHIYFCSTSVNLDAIKPKLPSSFSDSIQFVELHLPSSPEFPPHLHTTNGLPPTLMPALHQAFSMAAQHFESILQTLAPHLLIYDSLQPWAPRVASSLKIPAINFNTTGVFVISQGLHPIHYPHSKFPFSEFVLHNHWKAMYSTADGASTERTRKRGEAFLYCLHASCSVILINSFRELEGKYMDYLSVLLNKKVVPVGPLVYEPNQDGEDEGYSSIKNWLDKKEPSSTVFVSFGSEYFPSKEEMEEIAHGLEASEVNFIWVVRFPQGDNTSGIEDALPKGFLERAGERGMVVKGWAPQAKILKHWSTGGFVSHCGWNSVMESMMFGVPIIGVPMHVDQPFNAGLVEEAGVGVEAKRDPDGKIQRDEVAKLIKEVVVEKTREDVRKKAREMSEILRSKGEEKFDEMVAEISLLLKI</sequence>
<evidence type="ECO:0000250" key="1">
    <source>
        <dbReference type="UniProtKB" id="A0A0A1HA03"/>
    </source>
</evidence>
<evidence type="ECO:0000250" key="2">
    <source>
        <dbReference type="UniProtKB" id="K7NBW3"/>
    </source>
</evidence>
<evidence type="ECO:0000269" key="3">
    <source>
    </source>
</evidence>
<evidence type="ECO:0000269" key="4">
    <source>
    </source>
</evidence>
<evidence type="ECO:0000269" key="5">
    <source>
    </source>
</evidence>
<evidence type="ECO:0000269" key="6">
    <source>
    </source>
</evidence>
<evidence type="ECO:0000303" key="7">
    <source>
    </source>
</evidence>
<evidence type="ECO:0000303" key="8">
    <source>
    </source>
</evidence>
<evidence type="ECO:0000303" key="9">
    <source>
    </source>
</evidence>
<evidence type="ECO:0000305" key="10"/>
<evidence type="ECO:0000305" key="11">
    <source>
    </source>
</evidence>
<protein>
    <recommendedName>
        <fullName evidence="10">Mogroside IIIx synthase</fullName>
        <ecNumber evidence="3 6">2.4.1.-</ecNumber>
    </recommendedName>
    <alternativeName>
        <fullName evidence="10">Mogroside III synthase</fullName>
        <ecNumber evidence="6">2.4.1.-</ecNumber>
    </alternativeName>
    <alternativeName>
        <fullName evidence="10">Mogroside III-A synthase</fullName>
        <ecNumber evidence="4">2.4.1.-</ecNumber>
    </alternativeName>
    <alternativeName>
        <fullName evidence="10">Mogroside IV synthase</fullName>
        <ecNumber evidence="3">2.4.1.-</ecNumber>
    </alternativeName>
    <alternativeName>
        <fullName evidence="10">Mogroside IV-A synthase</fullName>
        <ecNumber evidence="3 4 6">2.4.1.-</ecNumber>
    </alternativeName>
    <alternativeName>
        <fullName evidence="10">Mogroside IV-E synthase</fullName>
        <ecNumber evidence="4">2.4.1.-</ecNumber>
    </alternativeName>
    <alternativeName>
        <fullName evidence="10">Mogroside V synthase</fullName>
        <ecNumber evidence="3 4 6">2.4.1.-</ecNumber>
    </alternativeName>
    <alternativeName>
        <fullName evidence="10">Mogroside VI synthase</fullName>
        <ecNumber evidence="6">2.4.1.-</ecNumber>
    </alternativeName>
    <alternativeName>
        <fullName evidence="10">Siamenoside I synthase</fullName>
        <ecNumber evidence="3 4 6">2.4.1.-</ecNumber>
    </alternativeName>
    <alternativeName>
        <fullName evidence="7">UDP-glycosyltransferase 94-289-3</fullName>
        <shortName evidence="9">SgUGT289-3</shortName>
        <shortName evidence="7">UGT94-289-3</shortName>
    </alternativeName>
    <alternativeName>
        <fullName evidence="8">UDP-glycosyltransferase 94-MS1</fullName>
        <shortName evidence="8">UGT94-MS1</shortName>
    </alternativeName>
</protein>
<organism>
    <name type="scientific">Siraitia grosvenorii</name>
    <name type="common">Monk's fruit</name>
    <name type="synonym">Luo han guo</name>
    <dbReference type="NCBI Taxonomy" id="190515"/>
    <lineage>
        <taxon>Eukaryota</taxon>
        <taxon>Viridiplantae</taxon>
        <taxon>Streptophyta</taxon>
        <taxon>Embryophyta</taxon>
        <taxon>Tracheophyta</taxon>
        <taxon>Spermatophyta</taxon>
        <taxon>Magnoliopsida</taxon>
        <taxon>eudicotyledons</taxon>
        <taxon>Gunneridae</taxon>
        <taxon>Pentapetalae</taxon>
        <taxon>rosids</taxon>
        <taxon>fabids</taxon>
        <taxon>Cucurbitales</taxon>
        <taxon>Cucurbitaceae</taxon>
        <taxon>Siraitieae</taxon>
        <taxon>Siraitia</taxon>
    </lineage>
</organism>
<keyword id="KW-0024">Alternative initiation</keyword>
<keyword id="KW-0808">Transferase</keyword>
<reference key="1">
    <citation type="journal article" date="2016" name="Proc. Natl. Acad. Sci. U.S.A.">
        <title>The biosynthetic pathway of the nonsugar, high-intensity sweetener mogroside V from Siraitia grosvenorii.</title>
        <authorList>
            <person name="Itkin M."/>
            <person name="Davidovich-Rikanati R."/>
            <person name="Cohen S."/>
            <person name="Portnoy V."/>
            <person name="Doron-Faigenboim A."/>
            <person name="Oren E."/>
            <person name="Freilich S."/>
            <person name="Tzuri G."/>
            <person name="Baranes N."/>
            <person name="Shen S."/>
            <person name="Petreikov M."/>
            <person name="Sertchook R."/>
            <person name="Ben-Dor S."/>
            <person name="Gottlieb H."/>
            <person name="Hernandez A."/>
            <person name="Nelson D.R."/>
            <person name="Paris H.S."/>
            <person name="Tadmor Y."/>
            <person name="Burger Y."/>
            <person name="Lewinsohn E."/>
            <person name="Katzir N."/>
            <person name="Schaffer A."/>
        </authorList>
    </citation>
    <scope>NUCLEOTIDE SEQUENCE (ISOFORM 1)</scope>
    <scope>FUNCTION (ISOFORM 1)</scope>
    <scope>CATALYTIC ACTIVITY (ISOFORM 1)</scope>
    <scope>PATHWAY</scope>
    <scope>TISSUE SPECIFICITY</scope>
    <scope>GENE FAMILY</scope>
    <scope>NOMENCLATURE</scope>
</reference>
<reference key="2">
    <citation type="journal article" date="2022" name="IScience">
        <title>Glycosyltransferase engineering and multi-glycosylation routes development facilitating synthesis of high-intensity sweetener mogrosides.</title>
        <authorList>
            <person name="Li J."/>
            <person name="Mu S."/>
            <person name="Yang J."/>
            <person name="Liu C."/>
            <person name="Zhang Y."/>
            <person name="Chen P."/>
            <person name="Zeng Y."/>
            <person name="Zhu Y."/>
            <person name="Sun Y."/>
        </authorList>
    </citation>
    <scope>NUCLEOTIDE SEQUENCE (ISOFORM 2)</scope>
    <scope>FUNCTION (ISOFORM 2)</scope>
    <scope>CATALYTIC ACTIVITY (ISOFORM 2)</scope>
    <scope>MUTAGENESIS OF SER-34; PHE-77; VAL-146; ALA-313; THR-344; MET-360 AND ALA-391 (ISOFORM 2)</scope>
    <scope>BIOPHYSICOCHEMICAL PROPERTIES (ISOFORM 2)</scope>
    <scope>ACTIVITY REGULATION</scope>
    <scope>BIOTECHNOLOGY</scope>
</reference>
<reference key="3">
    <citation type="journal article" date="2023" name="Commun. Biol.">
        <title>Heterologous mogrosides biosynthesis in cucumber and tomato by genetic manipulation.</title>
        <authorList>
            <person name="Liao J."/>
            <person name="Liu T."/>
            <person name="Xie L."/>
            <person name="Mo C."/>
            <person name="Qiao J."/>
            <person name="Huang X."/>
            <person name="Cui S."/>
            <person name="Jia X."/>
            <person name="Luo Z."/>
            <person name="Ma X."/>
        </authorList>
    </citation>
    <scope>BIOTECHNOLOGY</scope>
</reference>
<reference key="4">
    <citation type="journal article" date="2023" name="Molecules">
        <title>Post-ripening and key glycosyltransferase catalysis to promote sweet mogrosides accumulation of Siraitia grosvenorii fruits.</title>
        <authorList>
            <person name="Cui S."/>
            <person name="Zang Y."/>
            <person name="Xie L."/>
            <person name="Mo C."/>
            <person name="Su J."/>
            <person name="Jia X."/>
            <person name="Luo Z."/>
            <person name="Ma X."/>
        </authorList>
    </citation>
    <scope>FUNCTION (ISOFORM 1)</scope>
    <scope>CATALYTIC ACTIVITY (ISOFORM 1)</scope>
    <scope>DEVELOPMENTAL STAGE</scope>
    <scope>BIOPHYSICOCHEMICAL PROPERTIES (ISOFORM 1)</scope>
</reference>
<comment type="function">
    <text evidence="3 6">UDP-glycosyltransferase involved in the biosynthesis of cucurbitacin and mogroside tetracyclic triterpene natural products (e.g. siamenoside I and mogrosides IV, V and VI) (PubMed:27821754, PubMed:37375251). Cucurbitacins have cytotoxic properties and exhibit deterrent taste as a defense barrier against herbivores (PubMed:27821754, PubMed:37375251). Mogrosides are nonsugar highly oxygenated compounds used as high-intensity zero-calorie sweeteners; they also possess pharmacological properties such as regulating immunity, lowering blood sugar and lipid levels, protecting the liver, and acting as antioxidants and antitumor agents (PubMed:27821754, PubMed:37375251).</text>
</comment>
<comment type="function">
    <molecule>Isoform 1</molecule>
    <text evidence="3 6">Catalyzes the branched glucosylations of mogroside II-E, mogroside III, mogroside IIIx, mogroside IV, mogroside IV-A, siamenoside I and mogroside V, ending in the production of mogroside VI.</text>
</comment>
<comment type="function">
    <molecule>Isoform 2</molecule>
    <text evidence="4">Catalyzes the beta(1-6) branched glucosylations of mogroside II-E to produce mogroside IIIx by forming a beta(1-6) glycosidic bond with the 6-hydroxyl of glucose 1-C24; a subsequent glycosylation at glucose 1-C3 leads to the formation of mogroside IV-A with beta(1-6) glycosidic bond (PubMed:36248741). Can also use mogroside III-E, mogroside III-A, mogroside IV-E and mogroside IV-A as substrates (PubMed:36248741).</text>
</comment>
<comment type="catalytic activity">
    <reaction evidence="3 4 6">
        <text>mogroside IIE + UDP-alpha-D-glucose = mogroside IIIX + UDP + H(+)</text>
        <dbReference type="Rhea" id="RHEA:80187"/>
        <dbReference type="ChEBI" id="CHEBI:15378"/>
        <dbReference type="ChEBI" id="CHEBI:58223"/>
        <dbReference type="ChEBI" id="CHEBI:58885"/>
        <dbReference type="ChEBI" id="CHEBI:145198"/>
        <dbReference type="ChEBI" id="CHEBI:229952"/>
    </reaction>
    <physiologicalReaction direction="left-to-right" evidence="3 4 6">
        <dbReference type="Rhea" id="RHEA:80188"/>
    </physiologicalReaction>
</comment>
<comment type="catalytic activity">
    <reaction evidence="3 6">
        <text>mogroside III + UDP-alpha-D-glucose = mogroside IV + UDP + H(+)</text>
        <dbReference type="Rhea" id="RHEA:81923"/>
        <dbReference type="ChEBI" id="CHEBI:15378"/>
        <dbReference type="ChEBI" id="CHEBI:58223"/>
        <dbReference type="ChEBI" id="CHEBI:58885"/>
        <dbReference type="ChEBI" id="CHEBI:230514"/>
        <dbReference type="ChEBI" id="CHEBI:232044"/>
    </reaction>
    <physiologicalReaction direction="left-to-right" evidence="3 6">
        <dbReference type="Rhea" id="RHEA:81924"/>
    </physiologicalReaction>
</comment>
<comment type="catalytic activity">
    <reaction evidence="3 6">
        <text>mogroside III + UDP-alpha-D-glucose = siamenoside I + UDP + H(+)</text>
        <dbReference type="Rhea" id="RHEA:81927"/>
        <dbReference type="ChEBI" id="CHEBI:15378"/>
        <dbReference type="ChEBI" id="CHEBI:58223"/>
        <dbReference type="ChEBI" id="CHEBI:58885"/>
        <dbReference type="ChEBI" id="CHEBI:228908"/>
        <dbReference type="ChEBI" id="CHEBI:232044"/>
    </reaction>
    <physiologicalReaction direction="left-to-right" evidence="3 6">
        <dbReference type="Rhea" id="RHEA:81928"/>
    </physiologicalReaction>
</comment>
<comment type="catalytic activity">
    <reaction evidence="3 4 6">
        <text>mogroside IIIX + UDP-alpha-D-glucose = mogroside IVA + UDP + H(+)</text>
        <dbReference type="Rhea" id="RHEA:81863"/>
        <dbReference type="ChEBI" id="CHEBI:15378"/>
        <dbReference type="ChEBI" id="CHEBI:58223"/>
        <dbReference type="ChEBI" id="CHEBI:58885"/>
        <dbReference type="ChEBI" id="CHEBI:229952"/>
        <dbReference type="ChEBI" id="CHEBI:229958"/>
    </reaction>
    <physiologicalReaction direction="left-to-right" evidence="3 4 6">
        <dbReference type="Rhea" id="RHEA:81864"/>
    </physiologicalReaction>
</comment>
<comment type="catalytic activity">
    <reaction evidence="3 6">
        <text>mogroside IIIX + UDP-alpha-D-glucose = siamenoside I + UDP + H(+)</text>
        <dbReference type="Rhea" id="RHEA:81931"/>
        <dbReference type="ChEBI" id="CHEBI:15378"/>
        <dbReference type="ChEBI" id="CHEBI:58223"/>
        <dbReference type="ChEBI" id="CHEBI:58885"/>
        <dbReference type="ChEBI" id="CHEBI:228908"/>
        <dbReference type="ChEBI" id="CHEBI:229952"/>
    </reaction>
    <physiologicalReaction direction="left-to-right" evidence="3 6">
        <dbReference type="Rhea" id="RHEA:81932"/>
    </physiologicalReaction>
</comment>
<comment type="catalytic activity">
    <reaction evidence="3 4 6">
        <text>mogroside IV + UDP-alpha-D-glucose = mogroside V + UDP + H(+)</text>
        <dbReference type="Rhea" id="RHEA:81935"/>
        <dbReference type="ChEBI" id="CHEBI:15378"/>
        <dbReference type="ChEBI" id="CHEBI:58223"/>
        <dbReference type="ChEBI" id="CHEBI:58885"/>
        <dbReference type="ChEBI" id="CHEBI:229959"/>
        <dbReference type="ChEBI" id="CHEBI:230514"/>
    </reaction>
    <physiologicalReaction direction="left-to-right" evidence="3 4 6">
        <dbReference type="Rhea" id="RHEA:81936"/>
    </physiologicalReaction>
</comment>
<comment type="catalytic activity">
    <reaction evidence="3 4 6">
        <text>siamenoside I + UDP-alpha-D-glucose = mogroside V + UDP + H(+)</text>
        <dbReference type="Rhea" id="RHEA:81879"/>
        <dbReference type="ChEBI" id="CHEBI:15378"/>
        <dbReference type="ChEBI" id="CHEBI:58223"/>
        <dbReference type="ChEBI" id="CHEBI:58885"/>
        <dbReference type="ChEBI" id="CHEBI:228908"/>
        <dbReference type="ChEBI" id="CHEBI:229959"/>
    </reaction>
    <physiologicalReaction direction="left-to-right" evidence="3 4 6">
        <dbReference type="Rhea" id="RHEA:81880"/>
    </physiologicalReaction>
</comment>
<comment type="catalytic activity">
    <reaction evidence="6">
        <text>mogroside V + UDP-alpha-D-glucose = mogroside VI + UDP + H(+)</text>
        <dbReference type="Rhea" id="RHEA:81943"/>
        <dbReference type="ChEBI" id="CHEBI:15378"/>
        <dbReference type="ChEBI" id="CHEBI:58223"/>
        <dbReference type="ChEBI" id="CHEBI:58885"/>
        <dbReference type="ChEBI" id="CHEBI:229959"/>
        <dbReference type="ChEBI" id="CHEBI:232052"/>
    </reaction>
    <physiologicalReaction direction="left-to-right" evidence="6">
        <dbReference type="Rhea" id="RHEA:81944"/>
    </physiologicalReaction>
</comment>
<comment type="activity regulation">
    <molecule>Isoform 2</molecule>
    <text evidence="4">Activity is increased by Mg(2+).</text>
</comment>
<comment type="biophysicochemical properties">
    <molecule>Isoform 1</molecule>
    <phDependence>
        <text evidence="6">Optimum pH is 6.5-7.</text>
    </phDependence>
    <temperatureDependence>
        <text evidence="6">Optimum temperature is 45 degrees Celsius.</text>
    </temperatureDependence>
</comment>
<comment type="biophysicochemical properties">
    <molecule>Isoform 2</molecule>
    <kinetics>
        <KM evidence="4">34.31 uM for mogroside II-E</KM>
        <text evidence="4">kcat is 0.014 sec(-1) with mogroside II-E as substrate.</text>
    </kinetics>
    <phDependence>
        <text evidence="4">Optimum pH is 8.</text>
    </phDependence>
    <temperatureDependence>
        <text evidence="4">Optimum temperature is 45 degrees Celsius.</text>
    </temperatureDependence>
</comment>
<comment type="pathway">
    <text evidence="3">Secondary metabolite biosynthesis; terpenoid biosynthesis.</text>
</comment>
<comment type="alternative products">
    <event type="alternative initiation"/>
    <isoform>
        <id>P0DO67-1</id>
        <name>1</name>
        <sequence type="displayed"/>
    </isoform>
    <isoform>
        <id>P0DO67-2</id>
        <name>2</name>
        <name evidence="8">UGTMS1</name>
        <sequence type="described" ref="VSP_062391"/>
    </isoform>
</comment>
<comment type="tissue specificity">
    <text evidence="3">Highly expressed in mature fruits.</text>
</comment>
<comment type="developmental stage">
    <text evidence="6">Fruits stored at warm temperature (i.e. 35 degrees Celsius) after ripening accumulate sweet mogrosides V and VI at the expense of bitter-tasting mogrosides II-E and III in part due to UGT94-289-3 UDP-glycosyltransferase activity.</text>
</comment>
<comment type="biotechnology">
    <text evidence="5">C.sativus and L.esculentum expressing S.grosvenorii genes SgSQE1, SgCS, SgEPH2, SgP450, SgUGT269-1 and SgUGT289-3 accumulate siamenoside I and mogrosides III and V, thus providing a strategy for vegetable flavor improvement or for heterologous biosynthesis of mogrosides.</text>
</comment>
<comment type="biotechnology">
    <text evidence="4">S.cerevisiae missing EXG1 but transformed to express S.grosvenorii optimized UGT74AC1 (UGTMG1) and UGT94-289-3 (UGTMS1-M7) cultured with mogrol and glucose accumulates mogrosides I-E, II-E, III-A and IV-A as a result of mogrol multi-glycosylation.</text>
</comment>
<comment type="miscellaneous">
    <text evidence="11">Mogrosides, the major active constituents of S.grosvenorii fruits, are a mixture of cucurbitane-type triterpenoid glycosides that have been proven to be powerful and zero-caloric sweeteners and can hence be used as a sucrose substitute for diabetic and obese patients.</text>
</comment>
<comment type="similarity">
    <text evidence="10">Belongs to the UDP-glycosyltransferase family.</text>
</comment>
<proteinExistence type="evidence at protein level"/>
<feature type="chain" id="PRO_0000460922" description="Mogroside IIIx synthase">
    <location>
        <begin position="1"/>
        <end position="473"/>
    </location>
</feature>
<feature type="active site" description="Proton acceptor" evidence="1">
    <location>
        <position position="43"/>
    </location>
</feature>
<feature type="active site" description="Charge relay" evidence="1">
    <location>
        <position position="142"/>
    </location>
</feature>
<feature type="binding site" evidence="2">
    <location>
        <position position="293"/>
    </location>
    <ligand>
        <name>UDP-alpha-D-glucose</name>
        <dbReference type="ChEBI" id="CHEBI:58885"/>
    </ligand>
</feature>
<feature type="binding site" evidence="2">
    <location>
        <position position="356"/>
    </location>
    <ligand>
        <name>UDP-alpha-D-glucose</name>
        <dbReference type="ChEBI" id="CHEBI:58885"/>
    </ligand>
</feature>
<feature type="binding site" evidence="2">
    <location>
        <position position="374"/>
    </location>
    <ligand>
        <name>UDP-alpha-D-glucose</name>
        <dbReference type="ChEBI" id="CHEBI:58885"/>
    </ligand>
</feature>
<feature type="binding site" evidence="2">
    <location>
        <position position="375"/>
    </location>
    <ligand>
        <name>UDP-alpha-D-glucose</name>
        <dbReference type="ChEBI" id="CHEBI:58885"/>
    </ligand>
</feature>
<feature type="binding site" evidence="2">
    <location>
        <position position="376"/>
    </location>
    <ligand>
        <name>UDP-alpha-D-glucose</name>
        <dbReference type="ChEBI" id="CHEBI:58885"/>
    </ligand>
</feature>
<feature type="binding site" evidence="2">
    <location>
        <position position="379"/>
    </location>
    <ligand>
        <name>UDP-alpha-D-glucose</name>
        <dbReference type="ChEBI" id="CHEBI:58885"/>
    </ligand>
</feature>
<feature type="binding site" evidence="2">
    <location>
        <position position="395"/>
    </location>
    <ligand>
        <name>UDP-alpha-D-glucose</name>
        <dbReference type="ChEBI" id="CHEBI:58885"/>
    </ligand>
</feature>
<feature type="binding site" evidence="2">
    <location>
        <position position="396"/>
    </location>
    <ligand>
        <name>UDP-alpha-D-glucose</name>
        <dbReference type="ChEBI" id="CHEBI:58885"/>
    </ligand>
</feature>
<feature type="splice variant" id="VSP_062391" description="In isoform 2.">
    <location>
        <begin position="1"/>
        <end position="21"/>
    </location>
</feature>
<feature type="mutagenesis site" description="Slightly increased activity toward mogroside II-E. Strongly enhanced activity (22 fold); when associated with A-146. Strongly enhanced activity (34 fold); when associated with L-77 and A-146. High catalytic activity; when associated with L-77; A-146; V-313 and V-344. High catalytic activity; when associated with L-F77; A-146; V-344 and L-360. High catalytic activity; when associated with L-77; A-146; V-344 and V-391. In UGTMS1-M7; extremely high catalytic activity (351-fold increase) with acquired ability to transfer glucose to glucose 1-C3 of mogroside III-A and siamenoside I by forming beta(1-2) glycolic bonds and new activity toward mogroside IV-A and mogroside V; when associated with L-77; A-146; V-313; V-344; L-360 and V-391." evidence="4">
    <original>S</original>
    <variation>A</variation>
    <location sequence="P0DO67-2">
        <position position="34"/>
    </location>
</feature>
<feature type="mutagenesis site" description="Slightly increased activity toward mogroside II-E. Strongly enhanced activity (29 fold); when associated with A-146. Strongly enhanced activity (34 fold); when associated with A-34 and A-146. High catalytic activity; when associated with A-34; A-146; V-313 and V-344. High catalytic activity; when associated with A-34; A-146; V-344 and L-360. High catalytic activity; when associated with A-34; A-146; V-344 and V-391. In UGTMS1-M7; extremely high catalytic activity (351-fold increase) with acquired ability to transfer glucose to glucose 1-C3 of mogroside III-A and siamenoside I by forming beta(1-2) glycolic bonds and new activity toward mogroside IV-A and mogroside V; when associated with A-34; A-146; V-313; V-344; L-360 and V-391." evidence="4">
    <original>F</original>
    <variation>L</variation>
    <location sequence="P0DO67-2">
        <position position="77"/>
    </location>
</feature>
<feature type="mutagenesis site" description="Increased activity toward mogroside II-E. Strongly enhanced activity (22 fold); when associated with A-34. Strongly enhanced activity (29 fold); when associated with L-77. Strongly enhanced activity (34 fold); when associated with A-34 and L-77. High catalytic activity; when associated with A-34; L-77; V-313 and V-344. High catalytic activity; when associated with A-34; L-F77; V-344 and L-360. High catalytic activity; when associated with A-34; L-77; V-344 and V-391. In UGTMS1-M7; extremely high catalytic activity (351-fold increase) with acquired ability to transfer glucose to glucose 1-C3 of mogroside III-A and siamenoside I by forming beta(1-2) glycolic bonds and new activity toward mogroside IV-A and mogroside V; when associated with A-34; L-77; V-313; V-344; L-360 and V-391." evidence="4">
    <original>V</original>
    <variation>A</variation>
    <location sequence="P0DO67-2">
        <position position="146"/>
    </location>
</feature>
<feature type="mutagenesis site" description="Strongly increased activity toward mogroside II-E. High catalytic activity; when associated with A-34; L-77; A-146 and V-344. In UGTMS1-M7; extremely high catalytic activity (351-fold increase) with acquired ability to transfer glucose to glucose 1-C3 of mogroside III-A and siamenoside I by forming beta(1-2) glycolic bonds and new activity toward mogroside IV-A and mogroside V; when associated with A-34; L-77; A-146; V-344; L-360 and V-391." evidence="4">
    <original>A</original>
    <variation>V</variation>
    <location sequence="P0DO67-2">
        <position position="313"/>
    </location>
</feature>
<feature type="mutagenesis site" description="Strongly increased activity toward mogroside II-E. High catalytic activity; when associated with A-34; L-77; A-146 and V-313. High catalytic activity; when associated with A-34; L-F77; A-146 and L-360. High catalytic activity; when associated with A-34; L-77; A-146 and V-391. In UGTMS1-M7; extremely high catalytic activity (351-fold increase) with acquired ability to transfer glucose to glucose 1-C3 of mogroside III-A and siamenoside I by forming beta(1-2) glycolic bonds and new activity toward mogroside IV-A and mogroside V; when associated with A-34; L-77; A-146; V-313; L-360 and V-391." evidence="4">
    <original>T</original>
    <variation>V</variation>
    <location sequence="P0DO67-2">
        <position position="344"/>
    </location>
</feature>
<feature type="mutagenesis site" description="Strongly increased activity toward mogroside II-E. High catalytic activity; when associated with A-34; L-F77; A-146 and V-344. In UGTMS1-M7; extremely high catalytic activity (351-fold increase) with acquired ability to transfer glucose to glucose 1-C3 of mogroside III-A and siamenoside I by forming beta(1-2) glycolic bonds and new activity toward mogroside IV-A and mogroside V; when associated with A-34; L-77; A-146; V-313; V-344 and V-391." evidence="4">
    <original>M</original>
    <variation>L</variation>
    <location sequence="P0DO67-2">
        <position position="360"/>
    </location>
</feature>
<feature type="mutagenesis site" description="Strongly increased activity toward mogroside II-E. High catalytic activity; when associated with A-34; L-77; A-146 and V-344. In UGTMS1-M7; extremely high catalytic activity (351-fold increase) with acquired ability to transfer glucose to glucose 1-C3 of mogroside III-A and siamenoside I by forming beta(1-2) glycolic bonds and new activity toward mogroside IV-A and mogroside V; when associated with A-34; L-77; A-146; V-313; V-344 and L-360." evidence="4">
    <original>A</original>
    <variation>V</variation>
    <location sequence="P0DO67-2">
        <position position="391"/>
    </location>
</feature>
<accession>P0DO67</accession>